<reference key="1">
    <citation type="journal article" date="2006" name="Proc. Natl. Acad. Sci. U.S.A.">
        <title>Identification of genes subject to positive selection in uropathogenic strains of Escherichia coli: a comparative genomics approach.</title>
        <authorList>
            <person name="Chen S.L."/>
            <person name="Hung C.-S."/>
            <person name="Xu J."/>
            <person name="Reigstad C.S."/>
            <person name="Magrini V."/>
            <person name="Sabo A."/>
            <person name="Blasiar D."/>
            <person name="Bieri T."/>
            <person name="Meyer R.R."/>
            <person name="Ozersky P."/>
            <person name="Armstrong J.R."/>
            <person name="Fulton R.S."/>
            <person name="Latreille J.P."/>
            <person name="Spieth J."/>
            <person name="Hooton T.M."/>
            <person name="Mardis E.R."/>
            <person name="Hultgren S.J."/>
            <person name="Gordon J.I."/>
        </authorList>
    </citation>
    <scope>NUCLEOTIDE SEQUENCE [LARGE SCALE GENOMIC DNA]</scope>
    <source>
        <strain>UTI89 / UPEC</strain>
    </source>
</reference>
<feature type="chain" id="PRO_1000044715" description="UPF0761 membrane protein YihY">
    <location>
        <begin position="1"/>
        <end position="290"/>
    </location>
</feature>
<feature type="transmembrane region" description="Helical" evidence="1">
    <location>
        <begin position="44"/>
        <end position="64"/>
    </location>
</feature>
<feature type="transmembrane region" description="Helical" evidence="1">
    <location>
        <begin position="104"/>
        <end position="124"/>
    </location>
</feature>
<feature type="transmembrane region" description="Helical" evidence="1">
    <location>
        <begin position="140"/>
        <end position="160"/>
    </location>
</feature>
<feature type="transmembrane region" description="Helical" evidence="1">
    <location>
        <begin position="183"/>
        <end position="203"/>
    </location>
</feature>
<feature type="transmembrane region" description="Helical" evidence="1">
    <location>
        <begin position="210"/>
        <end position="230"/>
    </location>
</feature>
<feature type="transmembrane region" description="Helical" evidence="1">
    <location>
        <begin position="244"/>
        <end position="264"/>
    </location>
</feature>
<proteinExistence type="inferred from homology"/>
<accession>Q1R432</accession>
<name>YIHY_ECOUT</name>
<comment type="subcellular location">
    <subcellularLocation>
        <location evidence="1">Cell inner membrane</location>
        <topology evidence="1">Multi-pass membrane protein</topology>
    </subcellularLocation>
</comment>
<comment type="similarity">
    <text evidence="1">Belongs to the UPF0761 family.</text>
</comment>
<protein>
    <recommendedName>
        <fullName evidence="1">UPF0761 membrane protein YihY</fullName>
    </recommendedName>
</protein>
<organism>
    <name type="scientific">Escherichia coli (strain UTI89 / UPEC)</name>
    <dbReference type="NCBI Taxonomy" id="364106"/>
    <lineage>
        <taxon>Bacteria</taxon>
        <taxon>Pseudomonadati</taxon>
        <taxon>Pseudomonadota</taxon>
        <taxon>Gammaproteobacteria</taxon>
        <taxon>Enterobacterales</taxon>
        <taxon>Enterobacteriaceae</taxon>
        <taxon>Escherichia</taxon>
    </lineage>
</organism>
<sequence>MLKTIQDKARHRTRPLWAWLKLLWQRIDEDNMTTLAGNLAYVSLLSLVPLVAVVFALFAAFPMFSDVSIQLRHFIFANFLPATGDVIQRYIEQFVANSNKMTAVGACGLIVTALLLMYSIDSALNTIWRSKRARPKIYSFAVYWMILTLGPLLAGASLAISSYLLSLRWASDLNTVIDNVLRIFPLLLSWISFWLLYSIVPTIRVPNRDAIVGAFVAALLFEAGKKGFALYITMFPSYQLIYGVLAVIPILFVWVYWTWCIVLLGAEITVTLGEYRKLKQAAEQEEDDEP</sequence>
<dbReference type="EMBL" id="CP000243">
    <property type="protein sequence ID" value="ABE09882.1"/>
    <property type="molecule type" value="Genomic_DNA"/>
</dbReference>
<dbReference type="RefSeq" id="WP_000920762.1">
    <property type="nucleotide sequence ID" value="NZ_CP064825.1"/>
</dbReference>
<dbReference type="KEGG" id="eci:UTI89_C4470"/>
<dbReference type="HOGENOM" id="CLU_032288_0_0_6"/>
<dbReference type="Proteomes" id="UP000001952">
    <property type="component" value="Chromosome"/>
</dbReference>
<dbReference type="GO" id="GO:0005886">
    <property type="term" value="C:plasma membrane"/>
    <property type="evidence" value="ECO:0007669"/>
    <property type="project" value="UniProtKB-SubCell"/>
</dbReference>
<dbReference type="HAMAP" id="MF_00672">
    <property type="entry name" value="UPF0761"/>
    <property type="match status" value="1"/>
</dbReference>
<dbReference type="InterPro" id="IPR023679">
    <property type="entry name" value="UPF0761_bac"/>
</dbReference>
<dbReference type="InterPro" id="IPR017039">
    <property type="entry name" value="Virul_fac_BrkB"/>
</dbReference>
<dbReference type="NCBIfam" id="NF002457">
    <property type="entry name" value="PRK01637.1"/>
    <property type="match status" value="1"/>
</dbReference>
<dbReference type="NCBIfam" id="TIGR00765">
    <property type="entry name" value="yihY_not_rbn"/>
    <property type="match status" value="1"/>
</dbReference>
<dbReference type="PANTHER" id="PTHR30213">
    <property type="entry name" value="INNER MEMBRANE PROTEIN YHJD"/>
    <property type="match status" value="1"/>
</dbReference>
<dbReference type="PANTHER" id="PTHR30213:SF0">
    <property type="entry name" value="UPF0761 MEMBRANE PROTEIN YIHY"/>
    <property type="match status" value="1"/>
</dbReference>
<dbReference type="Pfam" id="PF03631">
    <property type="entry name" value="Virul_fac_BrkB"/>
    <property type="match status" value="1"/>
</dbReference>
<dbReference type="PIRSF" id="PIRSF035875">
    <property type="entry name" value="RNase_BN"/>
    <property type="match status" value="1"/>
</dbReference>
<evidence type="ECO:0000255" key="1">
    <source>
        <dbReference type="HAMAP-Rule" id="MF_00672"/>
    </source>
</evidence>
<keyword id="KW-0997">Cell inner membrane</keyword>
<keyword id="KW-1003">Cell membrane</keyword>
<keyword id="KW-0472">Membrane</keyword>
<keyword id="KW-0812">Transmembrane</keyword>
<keyword id="KW-1133">Transmembrane helix</keyword>
<gene>
    <name evidence="1" type="primary">yihY</name>
    <name type="ordered locus">UTI89_C4470</name>
</gene>